<evidence type="ECO:0000255" key="1">
    <source>
        <dbReference type="HAMAP-Rule" id="MF_00402"/>
    </source>
</evidence>
<evidence type="ECO:0000305" key="2"/>
<organism>
    <name type="scientific">Lysinibacillus sphaericus (strain C3-41)</name>
    <dbReference type="NCBI Taxonomy" id="444177"/>
    <lineage>
        <taxon>Bacteria</taxon>
        <taxon>Bacillati</taxon>
        <taxon>Bacillota</taxon>
        <taxon>Bacilli</taxon>
        <taxon>Bacillales</taxon>
        <taxon>Bacillaceae</taxon>
        <taxon>Lysinibacillus</taxon>
    </lineage>
</organism>
<name>RL19_LYSSC</name>
<protein>
    <recommendedName>
        <fullName evidence="1">Large ribosomal subunit protein bL19</fullName>
    </recommendedName>
    <alternativeName>
        <fullName evidence="2">50S ribosomal protein L19</fullName>
    </alternativeName>
</protein>
<dbReference type="EMBL" id="CP000817">
    <property type="protein sequence ID" value="ACA39131.1"/>
    <property type="molecule type" value="Genomic_DNA"/>
</dbReference>
<dbReference type="RefSeq" id="WP_008181294.1">
    <property type="nucleotide sequence ID" value="NC_010382.1"/>
</dbReference>
<dbReference type="SMR" id="B1HQI4"/>
<dbReference type="EnsemblBacteria" id="ACA39131">
    <property type="protein sequence ID" value="ACA39131"/>
    <property type="gene ID" value="Bsph_1531"/>
</dbReference>
<dbReference type="GeneID" id="29443070"/>
<dbReference type="KEGG" id="lsp:Bsph_1531"/>
<dbReference type="HOGENOM" id="CLU_103507_2_1_9"/>
<dbReference type="Proteomes" id="UP000002164">
    <property type="component" value="Chromosome"/>
</dbReference>
<dbReference type="GO" id="GO:0022625">
    <property type="term" value="C:cytosolic large ribosomal subunit"/>
    <property type="evidence" value="ECO:0007669"/>
    <property type="project" value="TreeGrafter"/>
</dbReference>
<dbReference type="GO" id="GO:0003735">
    <property type="term" value="F:structural constituent of ribosome"/>
    <property type="evidence" value="ECO:0007669"/>
    <property type="project" value="InterPro"/>
</dbReference>
<dbReference type="GO" id="GO:0006412">
    <property type="term" value="P:translation"/>
    <property type="evidence" value="ECO:0007669"/>
    <property type="project" value="UniProtKB-UniRule"/>
</dbReference>
<dbReference type="FunFam" id="2.30.30.790:FF:000001">
    <property type="entry name" value="50S ribosomal protein L19"/>
    <property type="match status" value="1"/>
</dbReference>
<dbReference type="Gene3D" id="2.30.30.790">
    <property type="match status" value="1"/>
</dbReference>
<dbReference type="HAMAP" id="MF_00402">
    <property type="entry name" value="Ribosomal_bL19"/>
    <property type="match status" value="1"/>
</dbReference>
<dbReference type="InterPro" id="IPR001857">
    <property type="entry name" value="Ribosomal_bL19"/>
</dbReference>
<dbReference type="InterPro" id="IPR018257">
    <property type="entry name" value="Ribosomal_bL19_CS"/>
</dbReference>
<dbReference type="InterPro" id="IPR038657">
    <property type="entry name" value="Ribosomal_bL19_sf"/>
</dbReference>
<dbReference type="InterPro" id="IPR008991">
    <property type="entry name" value="Translation_prot_SH3-like_sf"/>
</dbReference>
<dbReference type="NCBIfam" id="TIGR01024">
    <property type="entry name" value="rplS_bact"/>
    <property type="match status" value="1"/>
</dbReference>
<dbReference type="PANTHER" id="PTHR15680:SF9">
    <property type="entry name" value="LARGE RIBOSOMAL SUBUNIT PROTEIN BL19M"/>
    <property type="match status" value="1"/>
</dbReference>
<dbReference type="PANTHER" id="PTHR15680">
    <property type="entry name" value="RIBOSOMAL PROTEIN L19"/>
    <property type="match status" value="1"/>
</dbReference>
<dbReference type="Pfam" id="PF01245">
    <property type="entry name" value="Ribosomal_L19"/>
    <property type="match status" value="1"/>
</dbReference>
<dbReference type="PIRSF" id="PIRSF002191">
    <property type="entry name" value="Ribosomal_L19"/>
    <property type="match status" value="1"/>
</dbReference>
<dbReference type="PRINTS" id="PR00061">
    <property type="entry name" value="RIBOSOMALL19"/>
</dbReference>
<dbReference type="SUPFAM" id="SSF50104">
    <property type="entry name" value="Translation proteins SH3-like domain"/>
    <property type="match status" value="1"/>
</dbReference>
<dbReference type="PROSITE" id="PS01015">
    <property type="entry name" value="RIBOSOMAL_L19"/>
    <property type="match status" value="1"/>
</dbReference>
<accession>B1HQI4</accession>
<gene>
    <name evidence="1" type="primary">rplS</name>
    <name type="ordered locus">Bsph_1531</name>
</gene>
<proteinExistence type="inferred from homology"/>
<sequence>MSNIITEITKSQLRTDLPAFRPGDTVKVHVKVVEGTRERIQLFEGVVIKRRGGGISETFTVRKISYGVGVERTFPVHTPKIANLEVVRRGKVRRAKLYYLRNLRGKAARIKEIR</sequence>
<keyword id="KW-0687">Ribonucleoprotein</keyword>
<keyword id="KW-0689">Ribosomal protein</keyword>
<comment type="function">
    <text evidence="1">This protein is located at the 30S-50S ribosomal subunit interface and may play a role in the structure and function of the aminoacyl-tRNA binding site.</text>
</comment>
<comment type="similarity">
    <text evidence="1">Belongs to the bacterial ribosomal protein bL19 family.</text>
</comment>
<reference key="1">
    <citation type="journal article" date="2008" name="J. Bacteriol.">
        <title>Complete genome sequence of the mosquitocidal bacterium Bacillus sphaericus C3-41 and comparison with those of closely related Bacillus species.</title>
        <authorList>
            <person name="Hu X."/>
            <person name="Fan W."/>
            <person name="Han B."/>
            <person name="Liu H."/>
            <person name="Zheng D."/>
            <person name="Li Q."/>
            <person name="Dong W."/>
            <person name="Yan J."/>
            <person name="Gao M."/>
            <person name="Berry C."/>
            <person name="Yuan Z."/>
        </authorList>
    </citation>
    <scope>NUCLEOTIDE SEQUENCE [LARGE SCALE GENOMIC DNA]</scope>
    <source>
        <strain>C3-41</strain>
    </source>
</reference>
<feature type="chain" id="PRO_1000193860" description="Large ribosomal subunit protein bL19">
    <location>
        <begin position="1"/>
        <end position="114"/>
    </location>
</feature>